<organism>
    <name type="scientific">Haemophilus influenzae (strain PittGG)</name>
    <dbReference type="NCBI Taxonomy" id="374931"/>
    <lineage>
        <taxon>Bacteria</taxon>
        <taxon>Pseudomonadati</taxon>
        <taxon>Pseudomonadota</taxon>
        <taxon>Gammaproteobacteria</taxon>
        <taxon>Pasteurellales</taxon>
        <taxon>Pasteurellaceae</taxon>
        <taxon>Haemophilus</taxon>
    </lineage>
</organism>
<protein>
    <recommendedName>
        <fullName evidence="1">ATP-dependent protease subunit HslV</fullName>
        <ecNumber evidence="1">3.4.25.2</ecNumber>
    </recommendedName>
</protein>
<feature type="chain" id="PRO_1000012616" description="ATP-dependent protease subunit HslV">
    <location>
        <begin position="1"/>
        <end position="175"/>
    </location>
</feature>
<feature type="active site" evidence="1">
    <location>
        <position position="2"/>
    </location>
</feature>
<feature type="binding site" evidence="1">
    <location>
        <position position="158"/>
    </location>
    <ligand>
        <name>Na(+)</name>
        <dbReference type="ChEBI" id="CHEBI:29101"/>
    </ligand>
</feature>
<feature type="binding site" evidence="1">
    <location>
        <position position="161"/>
    </location>
    <ligand>
        <name>Na(+)</name>
        <dbReference type="ChEBI" id="CHEBI:29101"/>
    </ligand>
</feature>
<feature type="binding site" evidence="1">
    <location>
        <position position="164"/>
    </location>
    <ligand>
        <name>Na(+)</name>
        <dbReference type="ChEBI" id="CHEBI:29101"/>
    </ligand>
</feature>
<comment type="function">
    <text evidence="1">Protease subunit of a proteasome-like degradation complex believed to be a general protein degrading machinery.</text>
</comment>
<comment type="catalytic activity">
    <reaction evidence="1">
        <text>ATP-dependent cleavage of peptide bonds with broad specificity.</text>
        <dbReference type="EC" id="3.4.25.2"/>
    </reaction>
</comment>
<comment type="activity regulation">
    <text evidence="1">Allosterically activated by HslU binding.</text>
</comment>
<comment type="subunit">
    <text evidence="1">A double ring-shaped homohexamer of HslV is capped on each side by a ring-shaped HslU homohexamer. The assembly of the HslU/HslV complex is dependent on binding of ATP.</text>
</comment>
<comment type="subcellular location">
    <subcellularLocation>
        <location evidence="1">Cytoplasm</location>
    </subcellularLocation>
</comment>
<comment type="similarity">
    <text evidence="1">Belongs to the peptidase T1B family. HslV subfamily.</text>
</comment>
<reference key="1">
    <citation type="journal article" date="2007" name="Genome Biol.">
        <title>Characterization and modeling of the Haemophilus influenzae core and supragenomes based on the complete genomic sequences of Rd and 12 clinical nontypeable strains.</title>
        <authorList>
            <person name="Hogg J.S."/>
            <person name="Hu F.Z."/>
            <person name="Janto B."/>
            <person name="Boissy R."/>
            <person name="Hayes J."/>
            <person name="Keefe R."/>
            <person name="Post J.C."/>
            <person name="Ehrlich G.D."/>
        </authorList>
    </citation>
    <scope>NUCLEOTIDE SEQUENCE [LARGE SCALE GENOMIC DNA]</scope>
    <source>
        <strain>PittGG</strain>
    </source>
</reference>
<dbReference type="EC" id="3.4.25.2" evidence="1"/>
<dbReference type="EMBL" id="CP000672">
    <property type="protein sequence ID" value="ABR00061.1"/>
    <property type="molecule type" value="Genomic_DNA"/>
</dbReference>
<dbReference type="SMR" id="A5UH05"/>
<dbReference type="MEROPS" id="T01.006"/>
<dbReference type="KEGG" id="hiq:CGSHiGG_05730"/>
<dbReference type="HOGENOM" id="CLU_093872_1_0_6"/>
<dbReference type="Proteomes" id="UP000001990">
    <property type="component" value="Chromosome"/>
</dbReference>
<dbReference type="GO" id="GO:0009376">
    <property type="term" value="C:HslUV protease complex"/>
    <property type="evidence" value="ECO:0007669"/>
    <property type="project" value="UniProtKB-UniRule"/>
</dbReference>
<dbReference type="GO" id="GO:0005839">
    <property type="term" value="C:proteasome core complex"/>
    <property type="evidence" value="ECO:0007669"/>
    <property type="project" value="InterPro"/>
</dbReference>
<dbReference type="GO" id="GO:0046872">
    <property type="term" value="F:metal ion binding"/>
    <property type="evidence" value="ECO:0007669"/>
    <property type="project" value="UniProtKB-KW"/>
</dbReference>
<dbReference type="GO" id="GO:0004298">
    <property type="term" value="F:threonine-type endopeptidase activity"/>
    <property type="evidence" value="ECO:0007669"/>
    <property type="project" value="UniProtKB-KW"/>
</dbReference>
<dbReference type="GO" id="GO:0051603">
    <property type="term" value="P:proteolysis involved in protein catabolic process"/>
    <property type="evidence" value="ECO:0007669"/>
    <property type="project" value="InterPro"/>
</dbReference>
<dbReference type="CDD" id="cd01913">
    <property type="entry name" value="protease_HslV"/>
    <property type="match status" value="1"/>
</dbReference>
<dbReference type="FunFam" id="3.60.20.10:FF:000002">
    <property type="entry name" value="ATP-dependent protease subunit HslV"/>
    <property type="match status" value="1"/>
</dbReference>
<dbReference type="Gene3D" id="3.60.20.10">
    <property type="entry name" value="Glutamine Phosphoribosylpyrophosphate, subunit 1, domain 1"/>
    <property type="match status" value="1"/>
</dbReference>
<dbReference type="HAMAP" id="MF_00248">
    <property type="entry name" value="HslV"/>
    <property type="match status" value="1"/>
</dbReference>
<dbReference type="InterPro" id="IPR022281">
    <property type="entry name" value="ATP-dep_Prtase_HsIV_su"/>
</dbReference>
<dbReference type="InterPro" id="IPR029055">
    <property type="entry name" value="Ntn_hydrolases_N"/>
</dbReference>
<dbReference type="InterPro" id="IPR001353">
    <property type="entry name" value="Proteasome_sua/b"/>
</dbReference>
<dbReference type="InterPro" id="IPR023333">
    <property type="entry name" value="Proteasome_suB-type"/>
</dbReference>
<dbReference type="NCBIfam" id="TIGR03692">
    <property type="entry name" value="ATP_dep_HslV"/>
    <property type="match status" value="1"/>
</dbReference>
<dbReference type="NCBIfam" id="NF003964">
    <property type="entry name" value="PRK05456.1"/>
    <property type="match status" value="1"/>
</dbReference>
<dbReference type="PANTHER" id="PTHR32194:SF0">
    <property type="entry name" value="ATP-DEPENDENT PROTEASE SUBUNIT HSLV"/>
    <property type="match status" value="1"/>
</dbReference>
<dbReference type="PANTHER" id="PTHR32194">
    <property type="entry name" value="METALLOPROTEASE TLDD"/>
    <property type="match status" value="1"/>
</dbReference>
<dbReference type="Pfam" id="PF00227">
    <property type="entry name" value="Proteasome"/>
    <property type="match status" value="1"/>
</dbReference>
<dbReference type="PIRSF" id="PIRSF039093">
    <property type="entry name" value="HslV"/>
    <property type="match status" value="1"/>
</dbReference>
<dbReference type="SUPFAM" id="SSF56235">
    <property type="entry name" value="N-terminal nucleophile aminohydrolases (Ntn hydrolases)"/>
    <property type="match status" value="1"/>
</dbReference>
<dbReference type="PROSITE" id="PS51476">
    <property type="entry name" value="PROTEASOME_BETA_2"/>
    <property type="match status" value="1"/>
</dbReference>
<keyword id="KW-0021">Allosteric enzyme</keyword>
<keyword id="KW-0963">Cytoplasm</keyword>
<keyword id="KW-0378">Hydrolase</keyword>
<keyword id="KW-0479">Metal-binding</keyword>
<keyword id="KW-0645">Protease</keyword>
<keyword id="KW-0915">Sodium</keyword>
<keyword id="KW-0888">Threonine protease</keyword>
<evidence type="ECO:0000255" key="1">
    <source>
        <dbReference type="HAMAP-Rule" id="MF_00248"/>
    </source>
</evidence>
<name>HSLV_HAEIG</name>
<gene>
    <name evidence="1" type="primary">hslV</name>
    <name type="ordered locus">CGSHiGG_05730</name>
</gene>
<sequence>MTTIVSVRRNGQVVVGGDGQVSLGNTVMKGNARKVRRLYNGKVLAGFAGGTADAFTLFELFERKLEMHQGHLLKSAVELAKDWRTDRALRKLEAMLIVADEKESLIITGIGDVVQPEEDQILAIGSGGNYALSAARALVENTELSAREIVEKSLRIAGDICVFTNTNFTIEELPN</sequence>
<proteinExistence type="inferred from homology"/>
<accession>A5UH05</accession>